<accession>P32907</accession>
<accession>D6W1H8</accession>
<protein>
    <recommendedName>
        <fullName>Ammonia transport outward protein 2</fullName>
    </recommendedName>
</protein>
<name>ATO2_YEAST</name>
<evidence type="ECO:0000255" key="1"/>
<evidence type="ECO:0000256" key="2">
    <source>
        <dbReference type="SAM" id="MobiDB-lite"/>
    </source>
</evidence>
<evidence type="ECO:0000269" key="3">
    <source>
    </source>
</evidence>
<evidence type="ECO:0000269" key="4">
    <source>
    </source>
</evidence>
<evidence type="ECO:0000269" key="5">
    <source>
    </source>
</evidence>
<evidence type="ECO:0000305" key="6"/>
<evidence type="ECO:0007744" key="7">
    <source>
    </source>
</evidence>
<dbReference type="EMBL" id="X63746">
    <property type="protein sequence ID" value="CAA45279.1"/>
    <property type="molecule type" value="Genomic_DNA"/>
</dbReference>
<dbReference type="EMBL" id="X77395">
    <property type="protein sequence ID" value="CAA54571.1"/>
    <property type="molecule type" value="Genomic_DNA"/>
</dbReference>
<dbReference type="EMBL" id="Z71617">
    <property type="protein sequence ID" value="CAA96278.1"/>
    <property type="molecule type" value="Genomic_DNA"/>
</dbReference>
<dbReference type="EMBL" id="BK006947">
    <property type="protein sequence ID" value="DAA10544.1"/>
    <property type="molecule type" value="Genomic_DNA"/>
</dbReference>
<dbReference type="PIR" id="S31258">
    <property type="entry name" value="S31258"/>
</dbReference>
<dbReference type="RefSeq" id="NP_014399.3">
    <property type="nucleotide sequence ID" value="NM_001183179.3"/>
</dbReference>
<dbReference type="SMR" id="P32907"/>
<dbReference type="BioGRID" id="35828">
    <property type="interactions" value="67"/>
</dbReference>
<dbReference type="DIP" id="DIP-7904N"/>
<dbReference type="FunCoup" id="P32907">
    <property type="interactions" value="57"/>
</dbReference>
<dbReference type="IntAct" id="P32907">
    <property type="interactions" value="24"/>
</dbReference>
<dbReference type="STRING" id="4932.YNR002C"/>
<dbReference type="TCDB" id="2.A.96.1.7">
    <property type="family name" value="the acetate uptake transporter (acetr) family"/>
</dbReference>
<dbReference type="iPTMnet" id="P32907"/>
<dbReference type="PaxDb" id="4932-YNR002C"/>
<dbReference type="PeptideAtlas" id="P32907"/>
<dbReference type="EnsemblFungi" id="YNR002C_mRNA">
    <property type="protein sequence ID" value="YNR002C"/>
    <property type="gene ID" value="YNR002C"/>
</dbReference>
<dbReference type="GeneID" id="855736"/>
<dbReference type="KEGG" id="sce:YNR002C"/>
<dbReference type="AGR" id="SGD:S000005285"/>
<dbReference type="SGD" id="S000005285">
    <property type="gene designation" value="ATO2"/>
</dbReference>
<dbReference type="VEuPathDB" id="FungiDB:YNR002C"/>
<dbReference type="eggNOG" id="ENOG502QUJS">
    <property type="taxonomic scope" value="Eukaryota"/>
</dbReference>
<dbReference type="GeneTree" id="ENSGT00940000176398"/>
<dbReference type="HOGENOM" id="CLU_051062_0_0_1"/>
<dbReference type="InParanoid" id="P32907"/>
<dbReference type="OMA" id="ELQEWEY"/>
<dbReference type="OrthoDB" id="3648309at2759"/>
<dbReference type="BioCyc" id="YEAST:G3O-33321-MONOMER"/>
<dbReference type="BioGRID-ORCS" id="855736">
    <property type="hits" value="1 hit in 10 CRISPR screens"/>
</dbReference>
<dbReference type="PRO" id="PR:P32907"/>
<dbReference type="Proteomes" id="UP000002311">
    <property type="component" value="Chromosome XIV"/>
</dbReference>
<dbReference type="RNAct" id="P32907">
    <property type="molecule type" value="protein"/>
</dbReference>
<dbReference type="GO" id="GO:0000324">
    <property type="term" value="C:fungal-type vacuole"/>
    <property type="evidence" value="ECO:0007005"/>
    <property type="project" value="SGD"/>
</dbReference>
<dbReference type="GO" id="GO:0005739">
    <property type="term" value="C:mitochondrion"/>
    <property type="evidence" value="ECO:0007005"/>
    <property type="project" value="SGD"/>
</dbReference>
<dbReference type="GO" id="GO:0005886">
    <property type="term" value="C:plasma membrane"/>
    <property type="evidence" value="ECO:0000314"/>
    <property type="project" value="SGD"/>
</dbReference>
<dbReference type="GO" id="GO:0015123">
    <property type="term" value="F:acetate transmembrane transporter activity"/>
    <property type="evidence" value="ECO:0000318"/>
    <property type="project" value="GO_Central"/>
</dbReference>
<dbReference type="GO" id="GO:0008519">
    <property type="term" value="F:ammonium channel activity"/>
    <property type="evidence" value="ECO:0000315"/>
    <property type="project" value="SGD"/>
</dbReference>
<dbReference type="GO" id="GO:0072488">
    <property type="term" value="P:ammonium transmembrane transport"/>
    <property type="evidence" value="ECO:0000315"/>
    <property type="project" value="SGD"/>
</dbReference>
<dbReference type="GO" id="GO:0006811">
    <property type="term" value="P:monoatomic ion transport"/>
    <property type="evidence" value="ECO:0007669"/>
    <property type="project" value="UniProtKB-KW"/>
</dbReference>
<dbReference type="GO" id="GO:0019740">
    <property type="term" value="P:nitrogen utilization"/>
    <property type="evidence" value="ECO:0000315"/>
    <property type="project" value="SGD"/>
</dbReference>
<dbReference type="InterPro" id="IPR051633">
    <property type="entry name" value="AceTr"/>
</dbReference>
<dbReference type="InterPro" id="IPR000791">
    <property type="entry name" value="Gpr1/Fun34/SatP-like"/>
</dbReference>
<dbReference type="InterPro" id="IPR047622">
    <property type="entry name" value="GPR1_FUN34_YAAH"/>
</dbReference>
<dbReference type="NCBIfam" id="NF038013">
    <property type="entry name" value="AceTr_1"/>
    <property type="match status" value="1"/>
</dbReference>
<dbReference type="PANTHER" id="PTHR31123">
    <property type="entry name" value="ACCUMULATION OF DYADS PROTEIN 2-RELATED"/>
    <property type="match status" value="1"/>
</dbReference>
<dbReference type="PANTHER" id="PTHR31123:SF1">
    <property type="entry name" value="ACCUMULATION OF DYADS PROTEIN 2-RELATED"/>
    <property type="match status" value="1"/>
</dbReference>
<dbReference type="Pfam" id="PF01184">
    <property type="entry name" value="Gpr1_Fun34_YaaH"/>
    <property type="match status" value="1"/>
</dbReference>
<dbReference type="PROSITE" id="PS01114">
    <property type="entry name" value="GPR1_FUN34_YAAH"/>
    <property type="match status" value="1"/>
</dbReference>
<keyword id="KW-0007">Acetylation</keyword>
<keyword id="KW-0924">Ammonia transport</keyword>
<keyword id="KW-1003">Cell membrane</keyword>
<keyword id="KW-0406">Ion transport</keyword>
<keyword id="KW-0472">Membrane</keyword>
<keyword id="KW-0597">Phosphoprotein</keyword>
<keyword id="KW-1185">Reference proteome</keyword>
<keyword id="KW-0812">Transmembrane</keyword>
<keyword id="KW-1133">Transmembrane helix</keyword>
<keyword id="KW-0813">Transport</keyword>
<proteinExistence type="evidence at protein level"/>
<comment type="function">
    <text evidence="3 4">Transporter protein required for ammonia export. Involved in acetate resistance.</text>
</comment>
<comment type="subcellular location">
    <subcellularLocation>
        <location evidence="5">Cell membrane</location>
        <topology evidence="5">Multi-pass membrane protein</topology>
    </subcellularLocation>
    <text>Localizes to large detergent resistant patches of the cell membrane (DRM) enriched in ergosterol and sphingolipids.</text>
</comment>
<comment type="induction">
    <text evidence="5">By external ammonia.</text>
</comment>
<comment type="similarity">
    <text evidence="6">Belongs to the acetate uptake transporter (AceTr) (TC 2.A.96) family.</text>
</comment>
<gene>
    <name type="primary">ATO2</name>
    <name type="synonym">FUN34</name>
    <name type="ordered locus">YNR002C</name>
    <name type="ORF">N2029</name>
</gene>
<sequence>MSDREQSSGNTAFENPKALDSSEGEFISENNDQSRHSQESICKIYTAGKNNEYIYIGRQKFLRDDLFEAFGGTLNPGLAPAPVHKFANPAPLGLSGFALTTFVLSMFNARAQGITIPNVVVGCAMFYGGLVQLIAGIWEIALENTFGGTALCSFGGFWLSFGAIYIPWFGILDAYKDKESDLGNALGFYLLGWALFTFGLSVCTMKSTIMFFALFFLLAVTFLLLSIANFTGEVGVTRAGGVLGVIVAFIAWYNAYAGIATRQNSYIMVHPFALPSNDKVFF</sequence>
<organism>
    <name type="scientific">Saccharomyces cerevisiae (strain ATCC 204508 / S288c)</name>
    <name type="common">Baker's yeast</name>
    <dbReference type="NCBI Taxonomy" id="559292"/>
    <lineage>
        <taxon>Eukaryota</taxon>
        <taxon>Fungi</taxon>
        <taxon>Dikarya</taxon>
        <taxon>Ascomycota</taxon>
        <taxon>Saccharomycotina</taxon>
        <taxon>Saccharomycetes</taxon>
        <taxon>Saccharomycetales</taxon>
        <taxon>Saccharomycetaceae</taxon>
        <taxon>Saccharomyces</taxon>
    </lineage>
</organism>
<feature type="initiator methionine" description="Removed" evidence="7">
    <location>
        <position position="1"/>
    </location>
</feature>
<feature type="chain" id="PRO_0000135701" description="Ammonia transport outward protein 2">
    <location>
        <begin position="2"/>
        <end position="282"/>
    </location>
</feature>
<feature type="topological domain" description="Extracellular" evidence="1">
    <location>
        <begin position="2"/>
        <end position="86"/>
    </location>
</feature>
<feature type="transmembrane region" description="Helical" evidence="1">
    <location>
        <begin position="87"/>
        <end position="107"/>
    </location>
</feature>
<feature type="topological domain" description="Cytoplasmic" evidence="1">
    <location>
        <begin position="108"/>
        <end position="119"/>
    </location>
</feature>
<feature type="transmembrane region" description="Helical" evidence="1">
    <location>
        <begin position="120"/>
        <end position="140"/>
    </location>
</feature>
<feature type="topological domain" description="Extracellular" evidence="1">
    <location>
        <begin position="141"/>
        <end position="150"/>
    </location>
</feature>
<feature type="transmembrane region" description="Helical" evidence="1">
    <location>
        <begin position="151"/>
        <end position="171"/>
    </location>
</feature>
<feature type="topological domain" description="Cytoplasmic" evidence="1">
    <location>
        <begin position="172"/>
        <end position="184"/>
    </location>
</feature>
<feature type="transmembrane region" description="Helical" evidence="1">
    <location>
        <begin position="185"/>
        <end position="205"/>
    </location>
</feature>
<feature type="topological domain" description="Extracellular" evidence="1">
    <location>
        <begin position="206"/>
        <end position="207"/>
    </location>
</feature>
<feature type="transmembrane region" description="Helical" evidence="1">
    <location>
        <begin position="208"/>
        <end position="228"/>
    </location>
</feature>
<feature type="topological domain" description="Cytoplasmic" evidence="1">
    <location>
        <begin position="229"/>
        <end position="238"/>
    </location>
</feature>
<feature type="transmembrane region" description="Helical" evidence="1">
    <location>
        <begin position="239"/>
        <end position="259"/>
    </location>
</feature>
<feature type="topological domain" description="Extracellular" evidence="1">
    <location>
        <begin position="260"/>
        <end position="282"/>
    </location>
</feature>
<feature type="region of interest" description="Disordered" evidence="2">
    <location>
        <begin position="1"/>
        <end position="34"/>
    </location>
</feature>
<feature type="modified residue" description="N-acetylserine" evidence="7">
    <location>
        <position position="2"/>
    </location>
</feature>
<feature type="modified residue" description="Phosphoserine" evidence="7">
    <location>
        <position position="2"/>
    </location>
</feature>
<feature type="modified residue" description="Phosphoserine" evidence="7">
    <location>
        <position position="7"/>
    </location>
</feature>
<feature type="modified residue" description="Phosphoserine" evidence="7">
    <location>
        <position position="21"/>
    </location>
</feature>
<feature type="modified residue" description="Phosphoserine" evidence="7">
    <location>
        <position position="22"/>
    </location>
</feature>
<feature type="modified residue" description="Phosphoserine" evidence="7">
    <location>
        <position position="28"/>
    </location>
</feature>
<feature type="modified residue" description="Phosphoserine" evidence="7">
    <location>
        <position position="40"/>
    </location>
</feature>
<reference key="1">
    <citation type="journal article" date="1992" name="J. Biol. Chem.">
        <title>An essential and specific subunit of RNA polymerase III (C) is encoded by gene RPC34 in Saccharomyces cerevisiae.</title>
        <authorList>
            <person name="Stettler S."/>
            <person name="Mariotte S."/>
            <person name="Riva M."/>
            <person name="Sentenac A."/>
            <person name="Thuriaux P."/>
        </authorList>
    </citation>
    <scope>NUCLEOTIDE SEQUENCE [GENOMIC DNA]</scope>
    <source>
        <strain>S288c / GRF88</strain>
    </source>
</reference>
<reference key="2">
    <citation type="journal article" date="1994" name="Yeast">
        <title>Organization of the centromeric region of chromosome XIV in Saccharomyces cerevisiae.</title>
        <authorList>
            <person name="Lalo D."/>
            <person name="Stettler S."/>
            <person name="Mariotte S."/>
            <person name="Gendreau E."/>
            <person name="Thuriaux P."/>
        </authorList>
    </citation>
    <scope>NUCLEOTIDE SEQUENCE [GENOMIC DNA]</scope>
    <source>
        <strain>S288c / GRF88</strain>
    </source>
</reference>
<reference key="3">
    <citation type="journal article" date="1994" name="Yeast">
        <title>Twelve open reading frames revealed in the 23.6 kb segment flanking the centromere on the Saccharomyces cerevisiae chromosome XIV right arm.</title>
        <authorList>
            <person name="Verhasselt P."/>
            <person name="Aert R."/>
            <person name="Voet M."/>
            <person name="Volckaert G."/>
        </authorList>
    </citation>
    <scope>NUCLEOTIDE SEQUENCE [GENOMIC DNA]</scope>
    <source>
        <strain>ATCC 96604 / S288c / FY1679</strain>
    </source>
</reference>
<reference key="4">
    <citation type="journal article" date="1997" name="Nature">
        <title>The nucleotide sequence of Saccharomyces cerevisiae chromosome XIV and its evolutionary implications.</title>
        <authorList>
            <person name="Philippsen P."/>
            <person name="Kleine K."/>
            <person name="Poehlmann R."/>
            <person name="Duesterhoeft A."/>
            <person name="Hamberg K."/>
            <person name="Hegemann J.H."/>
            <person name="Obermaier B."/>
            <person name="Urrestarazu L.A."/>
            <person name="Aert R."/>
            <person name="Albermann K."/>
            <person name="Altmann R."/>
            <person name="Andre B."/>
            <person name="Baladron V."/>
            <person name="Ballesta J.P.G."/>
            <person name="Becam A.-M."/>
            <person name="Beinhauer J.D."/>
            <person name="Boskovic J."/>
            <person name="Buitrago M.J."/>
            <person name="Bussereau F."/>
            <person name="Coster F."/>
            <person name="Crouzet M."/>
            <person name="D'Angelo M."/>
            <person name="Dal Pero F."/>
            <person name="De Antoni A."/>
            <person name="del Rey F."/>
            <person name="Doignon F."/>
            <person name="Domdey H."/>
            <person name="Dubois E."/>
            <person name="Fiedler T.A."/>
            <person name="Fleig U."/>
            <person name="Floeth M."/>
            <person name="Fritz C."/>
            <person name="Gaillardin C."/>
            <person name="Garcia-Cantalejo J.M."/>
            <person name="Glansdorff N."/>
            <person name="Goffeau A."/>
            <person name="Gueldener U."/>
            <person name="Herbert C.J."/>
            <person name="Heumann K."/>
            <person name="Heuss-Neitzel D."/>
            <person name="Hilbert H."/>
            <person name="Hinni K."/>
            <person name="Iraqui Houssaini I."/>
            <person name="Jacquet M."/>
            <person name="Jimenez A."/>
            <person name="Jonniaux J.-L."/>
            <person name="Karpfinger-Hartl L."/>
            <person name="Lanfranchi G."/>
            <person name="Lepingle A."/>
            <person name="Levesque H."/>
            <person name="Lyck R."/>
            <person name="Maftahi M."/>
            <person name="Mallet L."/>
            <person name="Maurer C.T.C."/>
            <person name="Messenguy F."/>
            <person name="Mewes H.-W."/>
            <person name="Moestl D."/>
            <person name="Nasr F."/>
            <person name="Nicaud J.-M."/>
            <person name="Niedenthal R.K."/>
            <person name="Pandolfo D."/>
            <person name="Pierard A."/>
            <person name="Piravandi E."/>
            <person name="Planta R.J."/>
            <person name="Pohl T.M."/>
            <person name="Purnelle B."/>
            <person name="Rebischung C."/>
            <person name="Remacha M.A."/>
            <person name="Revuelta J.L."/>
            <person name="Rinke M."/>
            <person name="Saiz J.E."/>
            <person name="Sartorello F."/>
            <person name="Scherens B."/>
            <person name="Sen-Gupta M."/>
            <person name="Soler-Mira A."/>
            <person name="Urbanus J.H.M."/>
            <person name="Valle G."/>
            <person name="Van Dyck L."/>
            <person name="Verhasselt P."/>
            <person name="Vierendeels F."/>
            <person name="Vissers S."/>
            <person name="Voet M."/>
            <person name="Volckaert G."/>
            <person name="Wach A."/>
            <person name="Wambutt R."/>
            <person name="Wedler H."/>
            <person name="Zollner A."/>
            <person name="Hani J."/>
        </authorList>
    </citation>
    <scope>NUCLEOTIDE SEQUENCE [LARGE SCALE GENOMIC DNA]</scope>
    <source>
        <strain>ATCC 204508 / S288c</strain>
    </source>
</reference>
<reference key="5">
    <citation type="journal article" date="2014" name="G3 (Bethesda)">
        <title>The reference genome sequence of Saccharomyces cerevisiae: Then and now.</title>
        <authorList>
            <person name="Engel S.R."/>
            <person name="Dietrich F.S."/>
            <person name="Fisk D.G."/>
            <person name="Binkley G."/>
            <person name="Balakrishnan R."/>
            <person name="Costanzo M.C."/>
            <person name="Dwight S.S."/>
            <person name="Hitz B.C."/>
            <person name="Karra K."/>
            <person name="Nash R.S."/>
            <person name="Weng S."/>
            <person name="Wong E.D."/>
            <person name="Lloyd P."/>
            <person name="Skrzypek M.S."/>
            <person name="Miyasato S.R."/>
            <person name="Simison M."/>
            <person name="Cherry J.M."/>
        </authorList>
    </citation>
    <scope>GENOME REANNOTATION</scope>
    <source>
        <strain>ATCC 204508 / S288c</strain>
    </source>
</reference>
<reference key="6">
    <citation type="journal article" date="2002" name="Mol. Biol. Cell">
        <title>Ammonia pulses and metabolic oscillations guide yeast colony development.</title>
        <authorList>
            <person name="Palkova Z."/>
            <person name="Devaux F."/>
            <person name="Icicova M."/>
            <person name="Minarikova L."/>
            <person name="Le Crom S."/>
            <person name="Jacq C."/>
        </authorList>
    </citation>
    <scope>FUNCTION</scope>
</reference>
<reference key="7">
    <citation type="journal article" date="2006" name="Proc. Natl. Acad. Sci. U.S.A.">
        <title>A global topology map of the Saccharomyces cerevisiae membrane proteome.</title>
        <authorList>
            <person name="Kim H."/>
            <person name="Melen K."/>
            <person name="Oesterberg M."/>
            <person name="von Heijne G."/>
        </authorList>
    </citation>
    <scope>TOPOLOGY [LARGE SCALE ANALYSIS]</scope>
    <source>
        <strain>ATCC 208353 / W303-1A</strain>
    </source>
</reference>
<reference key="8">
    <citation type="journal article" date="2007" name="Biochim. Biophys. Acta">
        <title>Association of putative ammonium exporters Ato with detergent-resistant compartments of plasma membrane during yeast colony development: pH affects Ato1p localisation in patches.</title>
        <authorList>
            <person name="Ricicova M."/>
            <person name="Kucerova H."/>
            <person name="Vachova L."/>
            <person name="Palkova Z."/>
        </authorList>
    </citation>
    <scope>SUBCELLULAR LOCATION</scope>
    <scope>INDUCTION</scope>
</reference>
<reference key="9">
    <citation type="journal article" date="2007" name="FEMS Yeast Res.">
        <title>Mutations at different sites in members of the Gpr1/Fun34/YaaH protein family cause hypersensitivity to acetic acid in Saccharomyces cerevisiae as well as in Yarrowia lipolytica.</title>
        <authorList>
            <person name="Gentsch M."/>
            <person name="Kuschel M."/>
            <person name="Schlegel S."/>
            <person name="Barth G."/>
        </authorList>
    </citation>
    <scope>FUNCTION</scope>
</reference>
<reference key="10">
    <citation type="journal article" date="2007" name="Mol. Cell. Proteomics">
        <title>Profiling phosphoproteins of yeast mitochondria reveals a role of phosphorylation in assembly of the ATP synthase.</title>
        <authorList>
            <person name="Reinders J."/>
            <person name="Wagner K."/>
            <person name="Zahedi R.P."/>
            <person name="Stojanovski D."/>
            <person name="Eyrich B."/>
            <person name="van der Laan M."/>
            <person name="Rehling P."/>
            <person name="Sickmann A."/>
            <person name="Pfanner N."/>
            <person name="Meisinger C."/>
        </authorList>
    </citation>
    <scope>ACETYLATION [LARGE SCALE ANALYSIS] AT SER-2</scope>
    <scope>PHOSPHORYLATION [LARGE SCALE ANALYSIS] AT SER-2; SER-7; SER-21; SER-22; SER-28 AND SER-40</scope>
    <scope>CLEAVAGE OF INITIATOR METHIONINE [LARGE SCALE ANALYSIS]</scope>
    <scope>IDENTIFICATION BY MASS SPECTROMETRY [LARGE SCALE ANALYSIS]</scope>
    <source>
        <strain>ATCC 76625 / YPH499</strain>
    </source>
</reference>